<evidence type="ECO:0000255" key="1">
    <source>
        <dbReference type="HAMAP-Rule" id="MF_00380"/>
    </source>
</evidence>
<gene>
    <name evidence="1" type="primary">ihfA</name>
    <name evidence="1" type="synonym">himA</name>
    <name type="ordered locus">RHOS4_12000</name>
    <name type="ORF">RSP_2611</name>
</gene>
<comment type="function">
    <text evidence="1">This protein is one of the two subunits of integration host factor, a specific DNA-binding protein that functions in genetic recombination as well as in transcriptional and translational control.</text>
</comment>
<comment type="subunit">
    <text evidence="1">Heterodimer of an alpha and a beta chain.</text>
</comment>
<comment type="similarity">
    <text evidence="1">Belongs to the bacterial histone-like protein family.</text>
</comment>
<accession>Q3J366</accession>
<protein>
    <recommendedName>
        <fullName evidence="1">Integration host factor subunit alpha</fullName>
        <shortName evidence="1">IHF-alpha</shortName>
    </recommendedName>
</protein>
<proteinExistence type="inferred from homology"/>
<name>IHFA_CERS4</name>
<organism>
    <name type="scientific">Cereibacter sphaeroides (strain ATCC 17023 / DSM 158 / JCM 6121 / CCUG 31486 / LMG 2827 / NBRC 12203 / NCIMB 8253 / ATH 2.4.1.)</name>
    <name type="common">Rhodobacter sphaeroides</name>
    <dbReference type="NCBI Taxonomy" id="272943"/>
    <lineage>
        <taxon>Bacteria</taxon>
        <taxon>Pseudomonadati</taxon>
        <taxon>Pseudomonadota</taxon>
        <taxon>Alphaproteobacteria</taxon>
        <taxon>Rhodobacterales</taxon>
        <taxon>Paracoccaceae</taxon>
        <taxon>Cereibacter</taxon>
    </lineage>
</organism>
<feature type="chain" id="PRO_0000277766" description="Integration host factor subunit alpha">
    <location>
        <begin position="1"/>
        <end position="100"/>
    </location>
</feature>
<reference key="1">
    <citation type="submission" date="2005-09" db="EMBL/GenBank/DDBJ databases">
        <title>Complete sequence of chromosome 1 of Rhodobacter sphaeroides 2.4.1.</title>
        <authorList>
            <person name="Copeland A."/>
            <person name="Lucas S."/>
            <person name="Lapidus A."/>
            <person name="Barry K."/>
            <person name="Detter J.C."/>
            <person name="Glavina T."/>
            <person name="Hammon N."/>
            <person name="Israni S."/>
            <person name="Pitluck S."/>
            <person name="Richardson P."/>
            <person name="Mackenzie C."/>
            <person name="Choudhary M."/>
            <person name="Larimer F."/>
            <person name="Hauser L.J."/>
            <person name="Land M."/>
            <person name="Donohue T.J."/>
            <person name="Kaplan S."/>
        </authorList>
    </citation>
    <scope>NUCLEOTIDE SEQUENCE [LARGE SCALE GENOMIC DNA]</scope>
    <source>
        <strain>ATCC 17023 / DSM 158 / JCM 6121 / CCUG 31486 / LMG 2827 / NBRC 12203 / NCIMB 8253 / ATH 2.4.1.</strain>
    </source>
</reference>
<keyword id="KW-0233">DNA recombination</keyword>
<keyword id="KW-0238">DNA-binding</keyword>
<keyword id="KW-1185">Reference proteome</keyword>
<keyword id="KW-0804">Transcription</keyword>
<keyword id="KW-0805">Transcription regulation</keyword>
<keyword id="KW-0810">Translation regulation</keyword>
<dbReference type="EMBL" id="CP000143">
    <property type="protein sequence ID" value="ABA78768.1"/>
    <property type="molecule type" value="Genomic_DNA"/>
</dbReference>
<dbReference type="RefSeq" id="WP_002719760.1">
    <property type="nucleotide sequence ID" value="NZ_CP030271.1"/>
</dbReference>
<dbReference type="RefSeq" id="YP_352669.1">
    <property type="nucleotide sequence ID" value="NC_007493.2"/>
</dbReference>
<dbReference type="SMR" id="Q3J366"/>
<dbReference type="STRING" id="272943.RSP_2611"/>
<dbReference type="EnsemblBacteria" id="ABA78768">
    <property type="protein sequence ID" value="ABA78768"/>
    <property type="gene ID" value="RSP_2611"/>
</dbReference>
<dbReference type="GeneID" id="67446363"/>
<dbReference type="KEGG" id="rsp:RSP_2611"/>
<dbReference type="PATRIC" id="fig|272943.9.peg.1529"/>
<dbReference type="eggNOG" id="COG0776">
    <property type="taxonomic scope" value="Bacteria"/>
</dbReference>
<dbReference type="OrthoDB" id="9797747at2"/>
<dbReference type="PhylomeDB" id="Q3J366"/>
<dbReference type="Proteomes" id="UP000002703">
    <property type="component" value="Chromosome 1"/>
</dbReference>
<dbReference type="GO" id="GO:0005829">
    <property type="term" value="C:cytosol"/>
    <property type="evidence" value="ECO:0007669"/>
    <property type="project" value="TreeGrafter"/>
</dbReference>
<dbReference type="GO" id="GO:0003677">
    <property type="term" value="F:DNA binding"/>
    <property type="evidence" value="ECO:0007669"/>
    <property type="project" value="UniProtKB-UniRule"/>
</dbReference>
<dbReference type="GO" id="GO:0030527">
    <property type="term" value="F:structural constituent of chromatin"/>
    <property type="evidence" value="ECO:0007669"/>
    <property type="project" value="InterPro"/>
</dbReference>
<dbReference type="GO" id="GO:0006310">
    <property type="term" value="P:DNA recombination"/>
    <property type="evidence" value="ECO:0007669"/>
    <property type="project" value="UniProtKB-UniRule"/>
</dbReference>
<dbReference type="GO" id="GO:0009893">
    <property type="term" value="P:positive regulation of metabolic process"/>
    <property type="evidence" value="ECO:0007669"/>
    <property type="project" value="UniProtKB-ARBA"/>
</dbReference>
<dbReference type="GO" id="GO:0006355">
    <property type="term" value="P:regulation of DNA-templated transcription"/>
    <property type="evidence" value="ECO:0007669"/>
    <property type="project" value="UniProtKB-UniRule"/>
</dbReference>
<dbReference type="GO" id="GO:0006417">
    <property type="term" value="P:regulation of translation"/>
    <property type="evidence" value="ECO:0007669"/>
    <property type="project" value="UniProtKB-UniRule"/>
</dbReference>
<dbReference type="CDD" id="cd13835">
    <property type="entry name" value="IHF_A"/>
    <property type="match status" value="1"/>
</dbReference>
<dbReference type="Gene3D" id="4.10.520.10">
    <property type="entry name" value="IHF-like DNA-binding proteins"/>
    <property type="match status" value="1"/>
</dbReference>
<dbReference type="HAMAP" id="MF_00380">
    <property type="entry name" value="IHF_alpha"/>
    <property type="match status" value="1"/>
</dbReference>
<dbReference type="InterPro" id="IPR000119">
    <property type="entry name" value="Hist_DNA-bd"/>
</dbReference>
<dbReference type="InterPro" id="IPR020816">
    <property type="entry name" value="Histone-like_DNA-bd_CS"/>
</dbReference>
<dbReference type="InterPro" id="IPR010992">
    <property type="entry name" value="IHF-like_DNA-bd_dom_sf"/>
</dbReference>
<dbReference type="InterPro" id="IPR005684">
    <property type="entry name" value="IHF_alpha"/>
</dbReference>
<dbReference type="NCBIfam" id="TIGR00987">
    <property type="entry name" value="himA"/>
    <property type="match status" value="1"/>
</dbReference>
<dbReference type="NCBIfam" id="NF001401">
    <property type="entry name" value="PRK00285.1"/>
    <property type="match status" value="1"/>
</dbReference>
<dbReference type="PANTHER" id="PTHR33175">
    <property type="entry name" value="DNA-BINDING PROTEIN HU"/>
    <property type="match status" value="1"/>
</dbReference>
<dbReference type="PANTHER" id="PTHR33175:SF2">
    <property type="entry name" value="INTEGRATION HOST FACTOR SUBUNIT ALPHA"/>
    <property type="match status" value="1"/>
</dbReference>
<dbReference type="Pfam" id="PF00216">
    <property type="entry name" value="Bac_DNA_binding"/>
    <property type="match status" value="1"/>
</dbReference>
<dbReference type="PRINTS" id="PR01727">
    <property type="entry name" value="DNABINDINGHU"/>
</dbReference>
<dbReference type="SMART" id="SM00411">
    <property type="entry name" value="BHL"/>
    <property type="match status" value="1"/>
</dbReference>
<dbReference type="SUPFAM" id="SSF47729">
    <property type="entry name" value="IHF-like DNA-binding proteins"/>
    <property type="match status" value="1"/>
</dbReference>
<dbReference type="PROSITE" id="PS00045">
    <property type="entry name" value="HISTONE_LIKE"/>
    <property type="match status" value="1"/>
</dbReference>
<sequence>MSDKTLTRMDLSEAVFREVGLSRNESAQLVESVLQHVSDALASGETVKISSFGTFTVRDKSARIGRNPKTGDEVPISPRRVLTFRPSHLMKERVAAGGKN</sequence>